<evidence type="ECO:0000255" key="1">
    <source>
        <dbReference type="PROSITE-ProRule" id="PRU00253"/>
    </source>
</evidence>
<evidence type="ECO:0000305" key="2"/>
<reference key="1">
    <citation type="journal article" date="1994" name="J. Bacteriol.">
        <title>Analysis of duplicated gene sequences associated with tfdR and tfdS in Alcaligenes eutrophus JMP134.</title>
        <authorList>
            <person name="Matrubutham U."/>
            <person name="Harker A.R."/>
        </authorList>
    </citation>
    <scope>NUCLEOTIDE SEQUENCE [GENOMIC DNA]</scope>
    <source>
        <plasmid>pJP4</plasmid>
    </source>
</reference>
<reference key="2">
    <citation type="journal article" date="1995" name="Mol. Microbiol.">
        <title>Genetic and molecular analysis of a regulatory region of the herbicide 2,4-dichlorophenoxyacetate catabolic plasmid pJP4.</title>
        <authorList>
            <person name="You I.S."/>
            <person name="Ghosal D."/>
        </authorList>
    </citation>
    <scope>NUCLEOTIDE SEQUENCE [GENOMIC DNA]</scope>
    <scope>EXPRESSION IN PSEUDOMONAS CEPACIA 383</scope>
    <source>
        <plasmid>pJP4</plasmid>
    </source>
</reference>
<reference key="3">
    <citation type="journal article" date="2004" name="Environ. Microbiol.">
        <title>Genetic organization of the catabolic plasmid pJP4 from Ralstonia eutropha JMP134 (pJP4) reveals mechanisms of adaptation to chloroaromatic pollutants and evolution of specialized chloroaromatic degradation pathways.</title>
        <authorList>
            <person name="Trefault N."/>
            <person name="De la Iglesia R."/>
            <person name="Molina A.M."/>
            <person name="Manzano M."/>
            <person name="Ledger T."/>
            <person name="Perez-Pantoja D."/>
            <person name="Sanchez M.A."/>
            <person name="Stuardo M."/>
            <person name="Gonzalez B."/>
        </authorList>
    </citation>
    <scope>NUCLEOTIDE SEQUENCE [GENOMIC DNA]</scope>
    <source>
        <plasmid>pJP4</plasmid>
    </source>
</reference>
<reference key="4">
    <citation type="journal article" date="2010" name="PLoS ONE">
        <title>The complete multipartite genome sequence of Cupriavidus necator JMP134, a versatile pollutant degrader.</title>
        <authorList>
            <person name="Lykidis A."/>
            <person name="Perez-Pantoja D."/>
            <person name="Ledger T."/>
            <person name="Mavromatis K."/>
            <person name="Anderson I.J."/>
            <person name="Ivanova N.N."/>
            <person name="Hooper S.D."/>
            <person name="Lapidus A."/>
            <person name="Lucas S."/>
            <person name="Gonzalez B."/>
            <person name="Kyrpides N.C."/>
        </authorList>
    </citation>
    <scope>NUCLEOTIDE SEQUENCE [LARGE SCALE GENOMIC DNA]</scope>
    <source>
        <strain>JMP134 / LMG 1197</strain>
        <plasmid>pPJ4</plasmid>
    </source>
</reference>
<reference key="5">
    <citation type="journal article" date="1987" name="J. Bacteriol.">
        <title>Analysis, cloning, and high-level expression of 2,4-dichlorophenoxyacetate monooxygenase gene tfdA of Alcaligenes eutrophus JMP134.</title>
        <authorList>
            <person name="Streber W.R."/>
            <person name="Timmis K.N."/>
            <person name="Zenk M.H."/>
        </authorList>
    </citation>
    <scope>NUCLEOTIDE SEQUENCE [GENOMIC DNA] OF 1-180</scope>
    <source>
        <plasmid>pJP4</plasmid>
    </source>
</reference>
<reference key="6">
    <citation type="journal article" date="1988" name="Proc. Natl. Acad. Sci. U.S.A.">
        <title>A large family of bacterial activator proteins.</title>
        <authorList>
            <person name="Henikoff S."/>
            <person name="Haughn G.W."/>
            <person name="Calvo J.M."/>
            <person name="Wallace J.C."/>
        </authorList>
    </citation>
    <scope>IDENTIFICATION OF PROTEIN</scope>
    <scope>POSSIBLE DNA-BINDING REGION</scope>
</reference>
<organism>
    <name type="scientific">Cupriavidus pinatubonensis (strain JMP 134 / LMG 1197)</name>
    <name type="common">Cupriavidus necator (strain JMP 134)</name>
    <dbReference type="NCBI Taxonomy" id="264198"/>
    <lineage>
        <taxon>Bacteria</taxon>
        <taxon>Pseudomonadati</taxon>
        <taxon>Pseudomonadota</taxon>
        <taxon>Betaproteobacteria</taxon>
        <taxon>Burkholderiales</taxon>
        <taxon>Burkholderiaceae</taxon>
        <taxon>Cupriavidus</taxon>
    </lineage>
</organism>
<gene>
    <name type="primary">tfdS</name>
    <name type="synonym">tfdO</name>
    <name type="ordered locus">Reut_D6478</name>
</gene>
<protein>
    <recommendedName>
        <fullName>HTH-type transcriptional regulator TfdS</fullName>
    </recommendedName>
</protein>
<dbReference type="EMBL" id="S80112">
    <property type="protein sequence ID" value="AAB47014.2"/>
    <property type="molecule type" value="Genomic_DNA"/>
</dbReference>
<dbReference type="EMBL" id="AY365053">
    <property type="protein sequence ID" value="AAR31051.1"/>
    <property type="molecule type" value="Genomic_DNA"/>
</dbReference>
<dbReference type="EMBL" id="CP000093">
    <property type="protein sequence ID" value="AAZ65776.1"/>
    <property type="molecule type" value="Genomic_DNA"/>
</dbReference>
<dbReference type="EMBL" id="M16730">
    <property type="status" value="NOT_ANNOTATED_CDS"/>
    <property type="molecule type" value="Genomic_DNA"/>
</dbReference>
<dbReference type="RefSeq" id="WP_011178398.1">
    <property type="nucleotide sequence ID" value="NZ_AY365053.1"/>
</dbReference>
<dbReference type="SMR" id="Q46M54"/>
<dbReference type="KEGG" id="reu:Reut_D6478"/>
<dbReference type="HOGENOM" id="CLU_039613_6_4_4"/>
<dbReference type="OrthoDB" id="5292387at2"/>
<dbReference type="GO" id="GO:0005737">
    <property type="term" value="C:cytoplasm"/>
    <property type="evidence" value="ECO:0007669"/>
    <property type="project" value="UniProtKB-SubCell"/>
</dbReference>
<dbReference type="GO" id="GO:0032993">
    <property type="term" value="C:protein-DNA complex"/>
    <property type="evidence" value="ECO:0007669"/>
    <property type="project" value="TreeGrafter"/>
</dbReference>
<dbReference type="GO" id="GO:0003677">
    <property type="term" value="F:DNA binding"/>
    <property type="evidence" value="ECO:0007669"/>
    <property type="project" value="UniProtKB-KW"/>
</dbReference>
<dbReference type="GO" id="GO:0003700">
    <property type="term" value="F:DNA-binding transcription factor activity"/>
    <property type="evidence" value="ECO:0007669"/>
    <property type="project" value="InterPro"/>
</dbReference>
<dbReference type="GO" id="GO:0009056">
    <property type="term" value="P:catabolic process"/>
    <property type="evidence" value="ECO:0007669"/>
    <property type="project" value="UniProtKB-KW"/>
</dbReference>
<dbReference type="CDD" id="cd08446">
    <property type="entry name" value="PBP2_Chlorocatechol"/>
    <property type="match status" value="1"/>
</dbReference>
<dbReference type="FunFam" id="1.10.10.10:FF:000001">
    <property type="entry name" value="LysR family transcriptional regulator"/>
    <property type="match status" value="1"/>
</dbReference>
<dbReference type="Gene3D" id="3.40.190.10">
    <property type="entry name" value="Periplasmic binding protein-like II"/>
    <property type="match status" value="2"/>
</dbReference>
<dbReference type="Gene3D" id="1.10.10.10">
    <property type="entry name" value="Winged helix-like DNA-binding domain superfamily/Winged helix DNA-binding domain"/>
    <property type="match status" value="1"/>
</dbReference>
<dbReference type="InterPro" id="IPR005119">
    <property type="entry name" value="LysR_subst-bd"/>
</dbReference>
<dbReference type="InterPro" id="IPR000847">
    <property type="entry name" value="Tscrpt_reg_HTH_LysR"/>
</dbReference>
<dbReference type="InterPro" id="IPR036388">
    <property type="entry name" value="WH-like_DNA-bd_sf"/>
</dbReference>
<dbReference type="InterPro" id="IPR036390">
    <property type="entry name" value="WH_DNA-bd_sf"/>
</dbReference>
<dbReference type="PANTHER" id="PTHR30346:SF17">
    <property type="entry name" value="LYSR FAMILY TRANSCRIPTIONAL REGULATOR"/>
    <property type="match status" value="1"/>
</dbReference>
<dbReference type="PANTHER" id="PTHR30346">
    <property type="entry name" value="TRANSCRIPTIONAL DUAL REGULATOR HCAR-RELATED"/>
    <property type="match status" value="1"/>
</dbReference>
<dbReference type="Pfam" id="PF00126">
    <property type="entry name" value="HTH_1"/>
    <property type="match status" value="1"/>
</dbReference>
<dbReference type="Pfam" id="PF03466">
    <property type="entry name" value="LysR_substrate"/>
    <property type="match status" value="1"/>
</dbReference>
<dbReference type="PRINTS" id="PR00039">
    <property type="entry name" value="HTHLYSR"/>
</dbReference>
<dbReference type="SUPFAM" id="SSF53850">
    <property type="entry name" value="Periplasmic binding protein-like II"/>
    <property type="match status" value="1"/>
</dbReference>
<dbReference type="SUPFAM" id="SSF46785">
    <property type="entry name" value="Winged helix' DNA-binding domain"/>
    <property type="match status" value="1"/>
</dbReference>
<dbReference type="PROSITE" id="PS50931">
    <property type="entry name" value="HTH_LYSR"/>
    <property type="match status" value="1"/>
</dbReference>
<proteinExistence type="evidence at protein level"/>
<accession>Q46M54</accession>
<accession>P10086</accession>
<accession>P42429</accession>
<accession>P95668</accession>
<keyword id="KW-0010">Activator</keyword>
<keyword id="KW-0058">Aromatic hydrocarbons catabolism</keyword>
<keyword id="KW-0963">Cytoplasm</keyword>
<keyword id="KW-0238">DNA-binding</keyword>
<keyword id="KW-0614">Plasmid</keyword>
<keyword id="KW-0678">Repressor</keyword>
<keyword id="KW-0804">Transcription</keyword>
<keyword id="KW-0805">Transcription regulation</keyword>
<feature type="chain" id="PRO_0000105761" description="HTH-type transcriptional regulator TfdS">
    <location>
        <begin position="1"/>
        <end position="295"/>
    </location>
</feature>
<feature type="domain" description="HTH lysR-type" evidence="1">
    <location>
        <begin position="1"/>
        <end position="58"/>
    </location>
</feature>
<feature type="DNA-binding region" description="H-T-H motif" evidence="1">
    <location>
        <begin position="18"/>
        <end position="37"/>
    </location>
</feature>
<feature type="sequence conflict" description="In Ref. 1." evidence="2" ref="1">
    <original>A</original>
    <variation>D</variation>
    <location>
        <position position="264"/>
    </location>
</feature>
<geneLocation type="plasmid">
    <name>pJP4</name>
</geneLocation>
<geneLocation type="plasmid">
    <name>pPJ4</name>
</geneLocation>
<name>TFDS_CUPPJ</name>
<comment type="function">
    <text>Involved in the regulation of 3-chlorocatechol degradation. Transcriptional regulator of tfdB expression. Acts as a repressor in the absence of its effector (either 2-cis-chlorodiene lactone or chloromaleylacetate) but acts as an activator when its effector is present.</text>
</comment>
<comment type="subcellular location">
    <subcellularLocation>
        <location>Cytoplasm</location>
    </subcellularLocation>
</comment>
<comment type="similarity">
    <text evidence="2">Belongs to the LysR transcriptional regulatory family.</text>
</comment>
<comment type="caution">
    <text evidence="2">The products of the genes tfdR and tfdS were originally thought to be identical but in fact they differ by one residue (amino acid 264 which is Asp in tfdR and Ala in tfdS).</text>
</comment>
<sequence>MEFRQLRYFVAAAEEGNVGAAARRLHISQPPVTRQIHALEQHLGVLLFERSARGVQLTPAGAAFLEDARRMLELGRTSVDRSRAASRGEIGQLDIGYLGTAIYQTVPALLHAFTQAVPGATLSLALMPKVRQIEALRAGTIHLGVGRFYPQEPGITVEHLHYERLYIAAGSSIARQLRQDPTLLRLKSESLVLFPKEGRPSFADEVIALMRRAGVEPRVTAIVEDVNAALGLVAAGAGVTLVPASVAAIRRPFVRTMEMADASAKVPVSLTYLTDSRVPVLRAFLDVARRGKGQK</sequence>